<evidence type="ECO:0000255" key="1">
    <source>
        <dbReference type="HAMAP-Rule" id="MF_01416"/>
    </source>
</evidence>
<feature type="chain" id="PRO_1000184630" description="ATP synthase subunit delta">
    <location>
        <begin position="1"/>
        <end position="178"/>
    </location>
</feature>
<sequence length="178" mass="19509">MAELLTLARPYAKAAFAYASEQGATDNWSNALQVLSAAVQDEAFSAYLNRPELTPAEQVKLFAKVLGEDQSQAVSNFLTLLADNDRLVLLPEIAAEYEQLKSQNNNNVDVVIESAFPLTAEQEQLLKSALEKRFNSTVTVSVEVKPELIAGVVIRAGDQVIDDSALNKLEKMRTRLLA</sequence>
<accession>B2I0Z9</accession>
<reference key="1">
    <citation type="journal article" date="2008" name="Antimicrob. Agents Chemother.">
        <title>Whole-genome pyrosequencing of an epidemic multidrug-resistant Acinetobacter baumannii strain belonging to the European clone II group.</title>
        <authorList>
            <person name="Iacono M."/>
            <person name="Villa L."/>
            <person name="Fortini D."/>
            <person name="Bordoni R."/>
            <person name="Imperi F."/>
            <person name="Bonnal R.J."/>
            <person name="Sicheritz-Ponten T."/>
            <person name="De Bellis G."/>
            <person name="Visca P."/>
            <person name="Cassone A."/>
            <person name="Carattoli A."/>
        </authorList>
    </citation>
    <scope>NUCLEOTIDE SEQUENCE [LARGE SCALE GENOMIC DNA]</scope>
    <source>
        <strain>ACICU</strain>
    </source>
</reference>
<comment type="function">
    <text evidence="1">F(1)F(0) ATP synthase produces ATP from ADP in the presence of a proton or sodium gradient. F-type ATPases consist of two structural domains, F(1) containing the extramembraneous catalytic core and F(0) containing the membrane proton channel, linked together by a central stalk and a peripheral stalk. During catalysis, ATP synthesis in the catalytic domain of F(1) is coupled via a rotary mechanism of the central stalk subunits to proton translocation.</text>
</comment>
<comment type="function">
    <text evidence="1">This protein is part of the stalk that links CF(0) to CF(1). It either transmits conformational changes from CF(0) to CF(1) or is implicated in proton conduction.</text>
</comment>
<comment type="subunit">
    <text evidence="1">F-type ATPases have 2 components, F(1) - the catalytic core - and F(0) - the membrane proton channel. F(1) has five subunits: alpha(3), beta(3), gamma(1), delta(1), epsilon(1). F(0) has three main subunits: a(1), b(2) and c(10-14). The alpha and beta chains form an alternating ring which encloses part of the gamma chain. F(1) is attached to F(0) by a central stalk formed by the gamma and epsilon chains, while a peripheral stalk is formed by the delta and b chains.</text>
</comment>
<comment type="subcellular location">
    <subcellularLocation>
        <location evidence="1">Cell inner membrane</location>
        <topology evidence="1">Peripheral membrane protein</topology>
    </subcellularLocation>
</comment>
<comment type="similarity">
    <text evidence="1">Belongs to the ATPase delta chain family.</text>
</comment>
<gene>
    <name evidence="1" type="primary">atpH</name>
    <name type="ordered locus">ACICU_00175</name>
</gene>
<keyword id="KW-0066">ATP synthesis</keyword>
<keyword id="KW-0997">Cell inner membrane</keyword>
<keyword id="KW-1003">Cell membrane</keyword>
<keyword id="KW-0139">CF(1)</keyword>
<keyword id="KW-0375">Hydrogen ion transport</keyword>
<keyword id="KW-0406">Ion transport</keyword>
<keyword id="KW-0472">Membrane</keyword>
<keyword id="KW-0813">Transport</keyword>
<protein>
    <recommendedName>
        <fullName evidence="1">ATP synthase subunit delta</fullName>
    </recommendedName>
    <alternativeName>
        <fullName evidence="1">ATP synthase F(1) sector subunit delta</fullName>
    </alternativeName>
    <alternativeName>
        <fullName evidence="1">F-type ATPase subunit delta</fullName>
        <shortName evidence="1">F-ATPase subunit delta</shortName>
    </alternativeName>
</protein>
<organism>
    <name type="scientific">Acinetobacter baumannii (strain ACICU)</name>
    <dbReference type="NCBI Taxonomy" id="405416"/>
    <lineage>
        <taxon>Bacteria</taxon>
        <taxon>Pseudomonadati</taxon>
        <taxon>Pseudomonadota</taxon>
        <taxon>Gammaproteobacteria</taxon>
        <taxon>Moraxellales</taxon>
        <taxon>Moraxellaceae</taxon>
        <taxon>Acinetobacter</taxon>
        <taxon>Acinetobacter calcoaceticus/baumannii complex</taxon>
    </lineage>
</organism>
<name>ATPD_ACIBC</name>
<dbReference type="EMBL" id="CP000863">
    <property type="protein sequence ID" value="ACC55487.1"/>
    <property type="molecule type" value="Genomic_DNA"/>
</dbReference>
<dbReference type="RefSeq" id="WP_000818995.1">
    <property type="nucleotide sequence ID" value="NZ_CP031380.1"/>
</dbReference>
<dbReference type="SMR" id="B2I0Z9"/>
<dbReference type="KEGG" id="abc:ACICU_00175"/>
<dbReference type="HOGENOM" id="CLU_085114_3_0_6"/>
<dbReference type="Proteomes" id="UP000008839">
    <property type="component" value="Chromosome"/>
</dbReference>
<dbReference type="GO" id="GO:0005886">
    <property type="term" value="C:plasma membrane"/>
    <property type="evidence" value="ECO:0007669"/>
    <property type="project" value="UniProtKB-SubCell"/>
</dbReference>
<dbReference type="GO" id="GO:0045259">
    <property type="term" value="C:proton-transporting ATP synthase complex"/>
    <property type="evidence" value="ECO:0007669"/>
    <property type="project" value="UniProtKB-KW"/>
</dbReference>
<dbReference type="GO" id="GO:0046933">
    <property type="term" value="F:proton-transporting ATP synthase activity, rotational mechanism"/>
    <property type="evidence" value="ECO:0007669"/>
    <property type="project" value="UniProtKB-UniRule"/>
</dbReference>
<dbReference type="Gene3D" id="1.10.520.20">
    <property type="entry name" value="N-terminal domain of the delta subunit of the F1F0-ATP synthase"/>
    <property type="match status" value="1"/>
</dbReference>
<dbReference type="HAMAP" id="MF_01416">
    <property type="entry name" value="ATP_synth_delta_bact"/>
    <property type="match status" value="1"/>
</dbReference>
<dbReference type="InterPro" id="IPR026015">
    <property type="entry name" value="ATP_synth_OSCP/delta_N_sf"/>
</dbReference>
<dbReference type="InterPro" id="IPR020781">
    <property type="entry name" value="ATPase_OSCP/d_CS"/>
</dbReference>
<dbReference type="InterPro" id="IPR000711">
    <property type="entry name" value="ATPase_OSCP/dsu"/>
</dbReference>
<dbReference type="NCBIfam" id="TIGR01145">
    <property type="entry name" value="ATP_synt_delta"/>
    <property type="match status" value="1"/>
</dbReference>
<dbReference type="NCBIfam" id="NF004402">
    <property type="entry name" value="PRK05758.2-2"/>
    <property type="match status" value="1"/>
</dbReference>
<dbReference type="PANTHER" id="PTHR11910">
    <property type="entry name" value="ATP SYNTHASE DELTA CHAIN"/>
    <property type="match status" value="1"/>
</dbReference>
<dbReference type="Pfam" id="PF00213">
    <property type="entry name" value="OSCP"/>
    <property type="match status" value="1"/>
</dbReference>
<dbReference type="PRINTS" id="PR00125">
    <property type="entry name" value="ATPASEDELTA"/>
</dbReference>
<dbReference type="SUPFAM" id="SSF47928">
    <property type="entry name" value="N-terminal domain of the delta subunit of the F1F0-ATP synthase"/>
    <property type="match status" value="1"/>
</dbReference>
<dbReference type="PROSITE" id="PS00389">
    <property type="entry name" value="ATPASE_DELTA"/>
    <property type="match status" value="1"/>
</dbReference>
<proteinExistence type="inferred from homology"/>